<organism>
    <name type="scientific">Thermobifida fusca (strain YX)</name>
    <dbReference type="NCBI Taxonomy" id="269800"/>
    <lineage>
        <taxon>Bacteria</taxon>
        <taxon>Bacillati</taxon>
        <taxon>Actinomycetota</taxon>
        <taxon>Actinomycetes</taxon>
        <taxon>Streptosporangiales</taxon>
        <taxon>Nocardiopsidaceae</taxon>
        <taxon>Thermobifida</taxon>
    </lineage>
</organism>
<proteinExistence type="inferred from homology"/>
<name>LEU1_THEFY</name>
<accession>Q47RM9</accession>
<sequence>MIPQQQPSGMPFHRYQPFKPVDLPDRTWPSKTITKAPRWLSTDLRDGNQALIEPMDTERKREIFDLLVRMGYKEIEVGFPAASQTDYDFVRYLIEEDRIPDDVQISVLTQAREELIERTVQSLVGAKRATVHLYNATSPEFRRIVFGVNREECKGIAVEGTRTVLKFAEQYLKDTEYFGYEYSPEIFIDTELEFALEVCEAVMDVYQPGPDREIILNLPATVERATPNVYADQIEWMSRNLSRREYVCLSVHPHNDRGTAVAAAELAVMAGADRVEGCLFGHGERTGNVCLVTLGLNLFSQGIDPMIDFSNIDEIRRTVEHCTQLPVNPRHPYGGDLVYTAFSGSHQDAIKKGFHALEADAAAAGVPVDEYRWNMPYLPIDPKDVGRTYEAVIRVNSQSGKGGVSYVLQRDYSIDLPRRLQIEFSRVVQQFADAEGGEFSGERIWEIFTDTYLSEGVVGVMAYRSETSEDGEYCISADVRLRGEIREITGTGNGPISAFVDALAGVGFKLRVLDYSEHALSEGGDARAAAYVEAEVDGNVLWGVGISSNITTASLKAVCSAVNRAQQS</sequence>
<keyword id="KW-0028">Amino-acid biosynthesis</keyword>
<keyword id="KW-0100">Branched-chain amino acid biosynthesis</keyword>
<keyword id="KW-0963">Cytoplasm</keyword>
<keyword id="KW-0432">Leucine biosynthesis</keyword>
<keyword id="KW-0460">Magnesium</keyword>
<keyword id="KW-0479">Metal-binding</keyword>
<keyword id="KW-0808">Transferase</keyword>
<comment type="function">
    <text evidence="1">Catalyzes the condensation of the acetyl group of acetyl-CoA with 3-methyl-2-oxobutanoate (2-ketoisovalerate) to form 3-carboxy-3-hydroxy-4-methylpentanoate (2-isopropylmalate).</text>
</comment>
<comment type="catalytic activity">
    <reaction evidence="1">
        <text>3-methyl-2-oxobutanoate + acetyl-CoA + H2O = (2S)-2-isopropylmalate + CoA + H(+)</text>
        <dbReference type="Rhea" id="RHEA:21524"/>
        <dbReference type="ChEBI" id="CHEBI:1178"/>
        <dbReference type="ChEBI" id="CHEBI:11851"/>
        <dbReference type="ChEBI" id="CHEBI:15377"/>
        <dbReference type="ChEBI" id="CHEBI:15378"/>
        <dbReference type="ChEBI" id="CHEBI:57287"/>
        <dbReference type="ChEBI" id="CHEBI:57288"/>
        <dbReference type="EC" id="2.3.3.13"/>
    </reaction>
</comment>
<comment type="cofactor">
    <cofactor evidence="1">
        <name>Mg(2+)</name>
        <dbReference type="ChEBI" id="CHEBI:18420"/>
    </cofactor>
</comment>
<comment type="pathway">
    <text evidence="1">Amino-acid biosynthesis; L-leucine biosynthesis; L-leucine from 3-methyl-2-oxobutanoate: step 1/4.</text>
</comment>
<comment type="subunit">
    <text evidence="1">Homodimer.</text>
</comment>
<comment type="subcellular location">
    <subcellularLocation>
        <location evidence="1">Cytoplasm</location>
    </subcellularLocation>
</comment>
<comment type="similarity">
    <text evidence="1">Belongs to the alpha-IPM synthase/homocitrate synthase family. LeuA type 2 subfamily.</text>
</comment>
<dbReference type="EC" id="2.3.3.13" evidence="1"/>
<dbReference type="EMBL" id="CP000088">
    <property type="protein sequence ID" value="AAZ54888.1"/>
    <property type="molecule type" value="Genomic_DNA"/>
</dbReference>
<dbReference type="RefSeq" id="WP_016188375.1">
    <property type="nucleotide sequence ID" value="NC_007333.1"/>
</dbReference>
<dbReference type="SMR" id="Q47RM9"/>
<dbReference type="STRING" id="269800.Tfu_0850"/>
<dbReference type="KEGG" id="tfu:Tfu_0850"/>
<dbReference type="eggNOG" id="COG0119">
    <property type="taxonomic scope" value="Bacteria"/>
</dbReference>
<dbReference type="HOGENOM" id="CLU_004588_3_0_11"/>
<dbReference type="OrthoDB" id="9803573at2"/>
<dbReference type="UniPathway" id="UPA00048">
    <property type="reaction ID" value="UER00070"/>
</dbReference>
<dbReference type="GO" id="GO:0005737">
    <property type="term" value="C:cytoplasm"/>
    <property type="evidence" value="ECO:0007669"/>
    <property type="project" value="UniProtKB-SubCell"/>
</dbReference>
<dbReference type="GO" id="GO:0003852">
    <property type="term" value="F:2-isopropylmalate synthase activity"/>
    <property type="evidence" value="ECO:0007669"/>
    <property type="project" value="UniProtKB-UniRule"/>
</dbReference>
<dbReference type="GO" id="GO:0003985">
    <property type="term" value="F:acetyl-CoA C-acetyltransferase activity"/>
    <property type="evidence" value="ECO:0007669"/>
    <property type="project" value="UniProtKB-UniRule"/>
</dbReference>
<dbReference type="GO" id="GO:0000287">
    <property type="term" value="F:magnesium ion binding"/>
    <property type="evidence" value="ECO:0007669"/>
    <property type="project" value="UniProtKB-UniRule"/>
</dbReference>
<dbReference type="GO" id="GO:0009098">
    <property type="term" value="P:L-leucine biosynthetic process"/>
    <property type="evidence" value="ECO:0007669"/>
    <property type="project" value="UniProtKB-UniRule"/>
</dbReference>
<dbReference type="CDD" id="cd07942">
    <property type="entry name" value="DRE_TIM_LeuA"/>
    <property type="match status" value="1"/>
</dbReference>
<dbReference type="FunFam" id="3.20.20.70:FF:000045">
    <property type="entry name" value="2-isopropylmalate synthase"/>
    <property type="match status" value="1"/>
</dbReference>
<dbReference type="Gene3D" id="3.30.160.270">
    <property type="match status" value="1"/>
</dbReference>
<dbReference type="Gene3D" id="3.20.20.70">
    <property type="entry name" value="Aldolase class I"/>
    <property type="match status" value="1"/>
</dbReference>
<dbReference type="HAMAP" id="MF_00572">
    <property type="entry name" value="LeuA_type2"/>
    <property type="match status" value="1"/>
</dbReference>
<dbReference type="InterPro" id="IPR013709">
    <property type="entry name" value="2-isopropylmalate_synth_dimer"/>
</dbReference>
<dbReference type="InterPro" id="IPR002034">
    <property type="entry name" value="AIPM/Hcit_synth_CS"/>
</dbReference>
<dbReference type="InterPro" id="IPR013785">
    <property type="entry name" value="Aldolase_TIM"/>
</dbReference>
<dbReference type="InterPro" id="IPR005668">
    <property type="entry name" value="IPM_Synthase"/>
</dbReference>
<dbReference type="InterPro" id="IPR054692">
    <property type="entry name" value="LeuA-like_post-cat"/>
</dbReference>
<dbReference type="InterPro" id="IPR036230">
    <property type="entry name" value="LeuA_allosteric_dom_sf"/>
</dbReference>
<dbReference type="InterPro" id="IPR039371">
    <property type="entry name" value="LeuA_N_DRE-TIM"/>
</dbReference>
<dbReference type="InterPro" id="IPR000891">
    <property type="entry name" value="PYR_CT"/>
</dbReference>
<dbReference type="NCBIfam" id="TIGR00970">
    <property type="entry name" value="leuA_yeast"/>
    <property type="match status" value="1"/>
</dbReference>
<dbReference type="NCBIfam" id="NF002991">
    <property type="entry name" value="PRK03739.1"/>
    <property type="match status" value="1"/>
</dbReference>
<dbReference type="PANTHER" id="PTHR46911">
    <property type="match status" value="1"/>
</dbReference>
<dbReference type="PANTHER" id="PTHR46911:SF1">
    <property type="entry name" value="2-ISOPROPYLMALATE SYNTHASE"/>
    <property type="match status" value="1"/>
</dbReference>
<dbReference type="Pfam" id="PF00682">
    <property type="entry name" value="HMGL-like"/>
    <property type="match status" value="1"/>
</dbReference>
<dbReference type="Pfam" id="PF22615">
    <property type="entry name" value="IPMS_D2"/>
    <property type="match status" value="1"/>
</dbReference>
<dbReference type="Pfam" id="PF08502">
    <property type="entry name" value="LeuA_dimer"/>
    <property type="match status" value="1"/>
</dbReference>
<dbReference type="SMART" id="SM00917">
    <property type="entry name" value="LeuA_dimer"/>
    <property type="match status" value="1"/>
</dbReference>
<dbReference type="SUPFAM" id="SSF110921">
    <property type="entry name" value="2-isopropylmalate synthase LeuA, allosteric (dimerisation) domain"/>
    <property type="match status" value="1"/>
</dbReference>
<dbReference type="SUPFAM" id="SSF51569">
    <property type="entry name" value="Aldolase"/>
    <property type="match status" value="1"/>
</dbReference>
<dbReference type="SUPFAM" id="SSF89000">
    <property type="entry name" value="post-HMGL domain-like"/>
    <property type="match status" value="1"/>
</dbReference>
<dbReference type="PROSITE" id="PS00815">
    <property type="entry name" value="AIPM_HOMOCIT_SYNTH_1"/>
    <property type="match status" value="1"/>
</dbReference>
<dbReference type="PROSITE" id="PS00816">
    <property type="entry name" value="AIPM_HOMOCIT_SYNTH_2"/>
    <property type="match status" value="1"/>
</dbReference>
<dbReference type="PROSITE" id="PS50991">
    <property type="entry name" value="PYR_CT"/>
    <property type="match status" value="1"/>
</dbReference>
<protein>
    <recommendedName>
        <fullName evidence="1">2-isopropylmalate synthase</fullName>
        <ecNumber evidence="1">2.3.3.13</ecNumber>
    </recommendedName>
    <alternativeName>
        <fullName evidence="1">Alpha-IPM synthase</fullName>
    </alternativeName>
    <alternativeName>
        <fullName evidence="1">Alpha-isopropylmalate synthase</fullName>
    </alternativeName>
</protein>
<reference key="1">
    <citation type="journal article" date="2007" name="J. Bacteriol.">
        <title>Genome sequence and analysis of the soil cellulolytic actinomycete Thermobifida fusca YX.</title>
        <authorList>
            <person name="Lykidis A."/>
            <person name="Mavromatis K."/>
            <person name="Ivanova N."/>
            <person name="Anderson I."/>
            <person name="Land M."/>
            <person name="DiBartolo G."/>
            <person name="Martinez M."/>
            <person name="Lapidus A."/>
            <person name="Lucas S."/>
            <person name="Copeland A."/>
            <person name="Richardson P."/>
            <person name="Wilson D.B."/>
            <person name="Kyrpides N."/>
        </authorList>
    </citation>
    <scope>NUCLEOTIDE SEQUENCE [LARGE SCALE GENOMIC DNA]</scope>
    <source>
        <strain>YX</strain>
    </source>
</reference>
<evidence type="ECO:0000255" key="1">
    <source>
        <dbReference type="HAMAP-Rule" id="MF_00572"/>
    </source>
</evidence>
<gene>
    <name evidence="1" type="primary">leuA</name>
    <name type="ordered locus">Tfu_0850</name>
</gene>
<feature type="chain" id="PRO_1000129513" description="2-isopropylmalate synthase">
    <location>
        <begin position="1"/>
        <end position="568"/>
    </location>
</feature>
<feature type="domain" description="Pyruvate carboxyltransferase" evidence="1">
    <location>
        <begin position="37"/>
        <end position="313"/>
    </location>
</feature>
<feature type="region of interest" description="Regulatory domain" evidence="1">
    <location>
        <begin position="455"/>
        <end position="568"/>
    </location>
</feature>
<feature type="binding site" evidence="1">
    <location>
        <position position="46"/>
    </location>
    <ligand>
        <name>Mg(2+)</name>
        <dbReference type="ChEBI" id="CHEBI:18420"/>
    </ligand>
</feature>
<feature type="binding site" evidence="1">
    <location>
        <position position="252"/>
    </location>
    <ligand>
        <name>Mg(2+)</name>
        <dbReference type="ChEBI" id="CHEBI:18420"/>
    </ligand>
</feature>
<feature type="binding site" evidence="1">
    <location>
        <position position="254"/>
    </location>
    <ligand>
        <name>Mg(2+)</name>
        <dbReference type="ChEBI" id="CHEBI:18420"/>
    </ligand>
</feature>
<feature type="binding site" evidence="1">
    <location>
        <position position="288"/>
    </location>
    <ligand>
        <name>Mg(2+)</name>
        <dbReference type="ChEBI" id="CHEBI:18420"/>
    </ligand>
</feature>